<proteinExistence type="inferred from homology"/>
<feature type="chain" id="PRO_0000176041" description="Chemotaxis protein methyltransferase">
    <location>
        <begin position="1"/>
        <end position="275"/>
    </location>
</feature>
<feature type="domain" description="CheR-type methyltransferase" evidence="2">
    <location>
        <begin position="1"/>
        <end position="275"/>
    </location>
</feature>
<feature type="binding site" evidence="1">
    <location>
        <position position="76"/>
    </location>
    <ligand>
        <name>S-adenosyl-L-methionine</name>
        <dbReference type="ChEBI" id="CHEBI:59789"/>
    </ligand>
</feature>
<feature type="binding site" evidence="1">
    <location>
        <position position="78"/>
    </location>
    <ligand>
        <name>S-adenosyl-L-methionine</name>
        <dbReference type="ChEBI" id="CHEBI:59789"/>
    </ligand>
</feature>
<feature type="binding site" evidence="1">
    <location>
        <position position="82"/>
    </location>
    <ligand>
        <name>S-adenosyl-L-methionine</name>
        <dbReference type="ChEBI" id="CHEBI:59789"/>
    </ligand>
</feature>
<feature type="binding site" evidence="1">
    <location>
        <position position="117"/>
    </location>
    <ligand>
        <name>S-adenosyl-L-methionine</name>
        <dbReference type="ChEBI" id="CHEBI:59789"/>
    </ligand>
</feature>
<feature type="binding site" evidence="1">
    <location>
        <position position="145"/>
    </location>
    <ligand>
        <name>S-adenosyl-L-methionine</name>
        <dbReference type="ChEBI" id="CHEBI:59789"/>
    </ligand>
</feature>
<feature type="binding site" evidence="1">
    <location>
        <begin position="201"/>
        <end position="202"/>
    </location>
    <ligand>
        <name>S-adenosyl-L-methionine</name>
        <dbReference type="ChEBI" id="CHEBI:59789"/>
    </ligand>
</feature>
<feature type="binding site" evidence="1">
    <location>
        <begin position="218"/>
        <end position="219"/>
    </location>
    <ligand>
        <name>S-adenosyl-L-methionine</name>
        <dbReference type="ChEBI" id="CHEBI:59789"/>
    </ligand>
</feature>
<reference key="1">
    <citation type="journal article" date="1996" name="Mol. Microbiol.">
        <title>Chemotactic motility is required for invasion of the host by the fish pathogen Vibrio anguillarum.</title>
        <authorList>
            <person name="O'Toole R."/>
            <person name="Milton D.L."/>
            <person name="Wolf-Watz H."/>
        </authorList>
    </citation>
    <scope>NUCLEOTIDE SEQUENCE [GENOMIC DNA]</scope>
    <source>
        <strain>NB10 / Serotype O1</strain>
    </source>
</reference>
<organism>
    <name type="scientific">Vibrio anguillarum</name>
    <name type="common">Listonella anguillarum</name>
    <dbReference type="NCBI Taxonomy" id="55601"/>
    <lineage>
        <taxon>Bacteria</taxon>
        <taxon>Pseudomonadati</taxon>
        <taxon>Pseudomonadota</taxon>
        <taxon>Gammaproteobacteria</taxon>
        <taxon>Vibrionales</taxon>
        <taxon>Vibrionaceae</taxon>
        <taxon>Vibrio</taxon>
    </lineage>
</organism>
<dbReference type="EC" id="2.1.1.80"/>
<dbReference type="EMBL" id="U36378">
    <property type="protein sequence ID" value="AAB38489.1"/>
    <property type="molecule type" value="Genomic_DNA"/>
</dbReference>
<dbReference type="PIR" id="S70895">
    <property type="entry name" value="S70895"/>
</dbReference>
<dbReference type="RefSeq" id="WP_013856250.1">
    <property type="nucleotide sequence ID" value="NZ_VTYO01000002.1"/>
</dbReference>
<dbReference type="SMR" id="Q57508"/>
<dbReference type="STRING" id="55601.AA407_03940"/>
<dbReference type="OMA" id="YESLGHN"/>
<dbReference type="GO" id="GO:0008983">
    <property type="term" value="F:protein-glutamate O-methyltransferase activity"/>
    <property type="evidence" value="ECO:0007669"/>
    <property type="project" value="UniProtKB-EC"/>
</dbReference>
<dbReference type="GO" id="GO:0032259">
    <property type="term" value="P:methylation"/>
    <property type="evidence" value="ECO:0007669"/>
    <property type="project" value="UniProtKB-KW"/>
</dbReference>
<dbReference type="CDD" id="cd02440">
    <property type="entry name" value="AdoMet_MTases"/>
    <property type="match status" value="1"/>
</dbReference>
<dbReference type="FunFam" id="1.10.155.10:FF:000001">
    <property type="entry name" value="Chemotaxis methyltransferase CheR"/>
    <property type="match status" value="1"/>
</dbReference>
<dbReference type="FunFam" id="3.40.50.150:FF:000175">
    <property type="entry name" value="Chemotaxis methyltransferase CheR"/>
    <property type="match status" value="1"/>
</dbReference>
<dbReference type="Gene3D" id="1.10.155.10">
    <property type="entry name" value="Chemotaxis receptor methyltransferase CheR, N-terminal domain"/>
    <property type="match status" value="1"/>
</dbReference>
<dbReference type="Gene3D" id="3.40.50.150">
    <property type="entry name" value="Vaccinia Virus protein VP39"/>
    <property type="match status" value="1"/>
</dbReference>
<dbReference type="InterPro" id="IPR050903">
    <property type="entry name" value="Bact_Chemotaxis_MeTrfase"/>
</dbReference>
<dbReference type="InterPro" id="IPR022642">
    <property type="entry name" value="CheR_C"/>
</dbReference>
<dbReference type="InterPro" id="IPR000780">
    <property type="entry name" value="CheR_MeTrfase"/>
</dbReference>
<dbReference type="InterPro" id="IPR022641">
    <property type="entry name" value="CheR_N"/>
</dbReference>
<dbReference type="InterPro" id="IPR036804">
    <property type="entry name" value="CheR_N_sf"/>
</dbReference>
<dbReference type="InterPro" id="IPR029063">
    <property type="entry name" value="SAM-dependent_MTases_sf"/>
</dbReference>
<dbReference type="PANTHER" id="PTHR24422">
    <property type="entry name" value="CHEMOTAXIS PROTEIN METHYLTRANSFERASE"/>
    <property type="match status" value="1"/>
</dbReference>
<dbReference type="PANTHER" id="PTHR24422:SF21">
    <property type="entry name" value="CHEMOTAXIS PROTEIN METHYLTRANSFERASE 1"/>
    <property type="match status" value="1"/>
</dbReference>
<dbReference type="Pfam" id="PF01739">
    <property type="entry name" value="CheR"/>
    <property type="match status" value="1"/>
</dbReference>
<dbReference type="Pfam" id="PF03705">
    <property type="entry name" value="CheR_N"/>
    <property type="match status" value="1"/>
</dbReference>
<dbReference type="PRINTS" id="PR00996">
    <property type="entry name" value="CHERMTFRASE"/>
</dbReference>
<dbReference type="SMART" id="SM00138">
    <property type="entry name" value="MeTrc"/>
    <property type="match status" value="1"/>
</dbReference>
<dbReference type="SUPFAM" id="SSF47757">
    <property type="entry name" value="Chemotaxis receptor methyltransferase CheR, N-terminal domain"/>
    <property type="match status" value="1"/>
</dbReference>
<dbReference type="SUPFAM" id="SSF53335">
    <property type="entry name" value="S-adenosyl-L-methionine-dependent methyltransferases"/>
    <property type="match status" value="1"/>
</dbReference>
<dbReference type="PROSITE" id="PS50123">
    <property type="entry name" value="CHER"/>
    <property type="match status" value="1"/>
</dbReference>
<evidence type="ECO:0000250" key="1"/>
<evidence type="ECO:0000255" key="2">
    <source>
        <dbReference type="PROSITE-ProRule" id="PRU00051"/>
    </source>
</evidence>
<protein>
    <recommendedName>
        <fullName>Chemotaxis protein methyltransferase</fullName>
        <ecNumber>2.1.1.80</ecNumber>
    </recommendedName>
</protein>
<name>CHER_VIBAN</name>
<gene>
    <name type="primary">cheR</name>
</gene>
<accession>Q57508</accession>
<sequence length="275" mass="30809">MTAITISDQEYRDFSRFLESQCGIVLGDSKQYLVRSRLSPLVAKFKLTSLSDLLRDVVTGRNRELRVAAVDAMTTNETLWFRDAYPFTVLAERLLPEVAANKRPIKIWSAASSSGQEPYSMAMTVLETQQRKPGMLPSVAITATDISASMLDMCKAGIYDNLALGRGLSPERRKIFFEDAGDGRMKIKDNVKRLVNFRPQNLMESYALLGKFDIIFCRNVLIYFSPDMKSKVLNQMASSLNPGGYLLLGASESLTGLTDKFEMVRCNPGIIYKLK</sequence>
<keyword id="KW-0489">Methyltransferase</keyword>
<keyword id="KW-0949">S-adenosyl-L-methionine</keyword>
<keyword id="KW-0808">Transferase</keyword>
<comment type="function">
    <text evidence="1">Methylation of the membrane-bound methyl-accepting chemotaxis proteins (MCP) to form gamma-glutamyl methyl ester residues in MCP.</text>
</comment>
<comment type="catalytic activity">
    <reaction>
        <text>L-glutamyl-[protein] + S-adenosyl-L-methionine = [protein]-L-glutamate 5-O-methyl ester + S-adenosyl-L-homocysteine</text>
        <dbReference type="Rhea" id="RHEA:24452"/>
        <dbReference type="Rhea" id="RHEA-COMP:10208"/>
        <dbReference type="Rhea" id="RHEA-COMP:10311"/>
        <dbReference type="ChEBI" id="CHEBI:29973"/>
        <dbReference type="ChEBI" id="CHEBI:57856"/>
        <dbReference type="ChEBI" id="CHEBI:59789"/>
        <dbReference type="ChEBI" id="CHEBI:82795"/>
        <dbReference type="EC" id="2.1.1.80"/>
    </reaction>
</comment>